<name>RL1_ANASK</name>
<sequence length="234" mass="25070">MAHVAKKYKAAAEKVDRTKRYKLDEAMSLVKQTATKKFDETVDASINLGVDPKHADQVVRGAVVLPHGMGKTVRLAVFAKGDKAKEAQEAGADIVGAEDLAEKIQGGFMDFDKLIATPDMMGVVGRLGKILGPRGLMPNPKVGTVTMDLARAVKEQKAGKVEFRVEKAGIVHVPFGKASFDPDKLKANFSAIMEVIYKAKPQTAKGVYVKNVTLSTTMGPGIKVDLAELAAQHA</sequence>
<feature type="chain" id="PRO_1000141354" description="Large ribosomal subunit protein uL1">
    <location>
        <begin position="1"/>
        <end position="234"/>
    </location>
</feature>
<accession>B4UDT5</accession>
<protein>
    <recommendedName>
        <fullName evidence="1">Large ribosomal subunit protein uL1</fullName>
    </recommendedName>
    <alternativeName>
        <fullName evidence="2">50S ribosomal protein L1</fullName>
    </alternativeName>
</protein>
<dbReference type="EMBL" id="CP001131">
    <property type="protein sequence ID" value="ACG73501.1"/>
    <property type="molecule type" value="Genomic_DNA"/>
</dbReference>
<dbReference type="RefSeq" id="WP_012526298.1">
    <property type="nucleotide sequence ID" value="NC_011145.1"/>
</dbReference>
<dbReference type="SMR" id="B4UDT5"/>
<dbReference type="KEGG" id="ank:AnaeK_2274"/>
<dbReference type="HOGENOM" id="CLU_062853_0_0_7"/>
<dbReference type="OrthoDB" id="9803740at2"/>
<dbReference type="Proteomes" id="UP000001871">
    <property type="component" value="Chromosome"/>
</dbReference>
<dbReference type="GO" id="GO:0022625">
    <property type="term" value="C:cytosolic large ribosomal subunit"/>
    <property type="evidence" value="ECO:0007669"/>
    <property type="project" value="TreeGrafter"/>
</dbReference>
<dbReference type="GO" id="GO:0019843">
    <property type="term" value="F:rRNA binding"/>
    <property type="evidence" value="ECO:0007669"/>
    <property type="project" value="UniProtKB-UniRule"/>
</dbReference>
<dbReference type="GO" id="GO:0003735">
    <property type="term" value="F:structural constituent of ribosome"/>
    <property type="evidence" value="ECO:0007669"/>
    <property type="project" value="InterPro"/>
</dbReference>
<dbReference type="GO" id="GO:0000049">
    <property type="term" value="F:tRNA binding"/>
    <property type="evidence" value="ECO:0007669"/>
    <property type="project" value="UniProtKB-KW"/>
</dbReference>
<dbReference type="GO" id="GO:0006417">
    <property type="term" value="P:regulation of translation"/>
    <property type="evidence" value="ECO:0007669"/>
    <property type="project" value="UniProtKB-KW"/>
</dbReference>
<dbReference type="GO" id="GO:0006412">
    <property type="term" value="P:translation"/>
    <property type="evidence" value="ECO:0007669"/>
    <property type="project" value="UniProtKB-UniRule"/>
</dbReference>
<dbReference type="CDD" id="cd00403">
    <property type="entry name" value="Ribosomal_L1"/>
    <property type="match status" value="1"/>
</dbReference>
<dbReference type="FunFam" id="3.40.50.790:FF:000001">
    <property type="entry name" value="50S ribosomal protein L1"/>
    <property type="match status" value="1"/>
</dbReference>
<dbReference type="Gene3D" id="3.30.190.20">
    <property type="match status" value="1"/>
</dbReference>
<dbReference type="Gene3D" id="3.40.50.790">
    <property type="match status" value="1"/>
</dbReference>
<dbReference type="HAMAP" id="MF_01318_B">
    <property type="entry name" value="Ribosomal_uL1_B"/>
    <property type="match status" value="1"/>
</dbReference>
<dbReference type="InterPro" id="IPR005878">
    <property type="entry name" value="Ribosom_uL1_bac-type"/>
</dbReference>
<dbReference type="InterPro" id="IPR002143">
    <property type="entry name" value="Ribosomal_uL1"/>
</dbReference>
<dbReference type="InterPro" id="IPR023674">
    <property type="entry name" value="Ribosomal_uL1-like"/>
</dbReference>
<dbReference type="InterPro" id="IPR028364">
    <property type="entry name" value="Ribosomal_uL1/biogenesis"/>
</dbReference>
<dbReference type="InterPro" id="IPR016095">
    <property type="entry name" value="Ribosomal_uL1_3-a/b-sand"/>
</dbReference>
<dbReference type="InterPro" id="IPR023673">
    <property type="entry name" value="Ribosomal_uL1_CS"/>
</dbReference>
<dbReference type="NCBIfam" id="TIGR01169">
    <property type="entry name" value="rplA_bact"/>
    <property type="match status" value="1"/>
</dbReference>
<dbReference type="PANTHER" id="PTHR36427">
    <property type="entry name" value="54S RIBOSOMAL PROTEIN L1, MITOCHONDRIAL"/>
    <property type="match status" value="1"/>
</dbReference>
<dbReference type="PANTHER" id="PTHR36427:SF3">
    <property type="entry name" value="LARGE RIBOSOMAL SUBUNIT PROTEIN UL1M"/>
    <property type="match status" value="1"/>
</dbReference>
<dbReference type="Pfam" id="PF00687">
    <property type="entry name" value="Ribosomal_L1"/>
    <property type="match status" value="1"/>
</dbReference>
<dbReference type="PIRSF" id="PIRSF002155">
    <property type="entry name" value="Ribosomal_L1"/>
    <property type="match status" value="1"/>
</dbReference>
<dbReference type="SUPFAM" id="SSF56808">
    <property type="entry name" value="Ribosomal protein L1"/>
    <property type="match status" value="1"/>
</dbReference>
<dbReference type="PROSITE" id="PS01199">
    <property type="entry name" value="RIBOSOMAL_L1"/>
    <property type="match status" value="1"/>
</dbReference>
<evidence type="ECO:0000255" key="1">
    <source>
        <dbReference type="HAMAP-Rule" id="MF_01318"/>
    </source>
</evidence>
<evidence type="ECO:0000305" key="2"/>
<reference key="1">
    <citation type="submission" date="2008-08" db="EMBL/GenBank/DDBJ databases">
        <title>Complete sequence of Anaeromyxobacter sp. K.</title>
        <authorList>
            <consortium name="US DOE Joint Genome Institute"/>
            <person name="Lucas S."/>
            <person name="Copeland A."/>
            <person name="Lapidus A."/>
            <person name="Glavina del Rio T."/>
            <person name="Dalin E."/>
            <person name="Tice H."/>
            <person name="Bruce D."/>
            <person name="Goodwin L."/>
            <person name="Pitluck S."/>
            <person name="Saunders E."/>
            <person name="Brettin T."/>
            <person name="Detter J.C."/>
            <person name="Han C."/>
            <person name="Larimer F."/>
            <person name="Land M."/>
            <person name="Hauser L."/>
            <person name="Kyrpides N."/>
            <person name="Ovchinnikiva G."/>
            <person name="Beliaev A."/>
        </authorList>
    </citation>
    <scope>NUCLEOTIDE SEQUENCE [LARGE SCALE GENOMIC DNA]</scope>
    <source>
        <strain>K</strain>
    </source>
</reference>
<proteinExistence type="inferred from homology"/>
<keyword id="KW-0678">Repressor</keyword>
<keyword id="KW-0687">Ribonucleoprotein</keyword>
<keyword id="KW-0689">Ribosomal protein</keyword>
<keyword id="KW-0694">RNA-binding</keyword>
<keyword id="KW-0699">rRNA-binding</keyword>
<keyword id="KW-0810">Translation regulation</keyword>
<keyword id="KW-0820">tRNA-binding</keyword>
<gene>
    <name evidence="1" type="primary">rplA</name>
    <name type="ordered locus">AnaeK_2274</name>
</gene>
<organism>
    <name type="scientific">Anaeromyxobacter sp. (strain K)</name>
    <dbReference type="NCBI Taxonomy" id="447217"/>
    <lineage>
        <taxon>Bacteria</taxon>
        <taxon>Pseudomonadati</taxon>
        <taxon>Myxococcota</taxon>
        <taxon>Myxococcia</taxon>
        <taxon>Myxococcales</taxon>
        <taxon>Cystobacterineae</taxon>
        <taxon>Anaeromyxobacteraceae</taxon>
        <taxon>Anaeromyxobacter</taxon>
    </lineage>
</organism>
<comment type="function">
    <text evidence="1">Binds directly to 23S rRNA. The L1 stalk is quite mobile in the ribosome, and is involved in E site tRNA release.</text>
</comment>
<comment type="function">
    <text evidence="1">Protein L1 is also a translational repressor protein, it controls the translation of the L11 operon by binding to its mRNA.</text>
</comment>
<comment type="subunit">
    <text evidence="1">Part of the 50S ribosomal subunit.</text>
</comment>
<comment type="similarity">
    <text evidence="1">Belongs to the universal ribosomal protein uL1 family.</text>
</comment>